<protein>
    <recommendedName>
        <fullName evidence="1">PKHD-type hydroxylase Bpet2704</fullName>
        <ecNumber evidence="1">1.14.11.-</ecNumber>
    </recommendedName>
</protein>
<organism>
    <name type="scientific">Bordetella petrii (strain ATCC BAA-461 / DSM 12804 / CCUG 43448)</name>
    <dbReference type="NCBI Taxonomy" id="340100"/>
    <lineage>
        <taxon>Bacteria</taxon>
        <taxon>Pseudomonadati</taxon>
        <taxon>Pseudomonadota</taxon>
        <taxon>Betaproteobacteria</taxon>
        <taxon>Burkholderiales</taxon>
        <taxon>Alcaligenaceae</taxon>
        <taxon>Bordetella</taxon>
    </lineage>
</organism>
<keyword id="KW-0223">Dioxygenase</keyword>
<keyword id="KW-0408">Iron</keyword>
<keyword id="KW-0479">Metal-binding</keyword>
<keyword id="KW-0560">Oxidoreductase</keyword>
<keyword id="KW-0847">Vitamin C</keyword>
<dbReference type="EC" id="1.14.11.-" evidence="1"/>
<dbReference type="EMBL" id="AM902716">
    <property type="protein sequence ID" value="CAP43046.1"/>
    <property type="molecule type" value="Genomic_DNA"/>
</dbReference>
<dbReference type="SMR" id="A9IQD9"/>
<dbReference type="STRING" id="94624.Bpet2704"/>
<dbReference type="KEGG" id="bpt:Bpet2704"/>
<dbReference type="eggNOG" id="COG3128">
    <property type="taxonomic scope" value="Bacteria"/>
</dbReference>
<dbReference type="Proteomes" id="UP000001225">
    <property type="component" value="Chromosome"/>
</dbReference>
<dbReference type="GO" id="GO:0016706">
    <property type="term" value="F:2-oxoglutarate-dependent dioxygenase activity"/>
    <property type="evidence" value="ECO:0007669"/>
    <property type="project" value="UniProtKB-UniRule"/>
</dbReference>
<dbReference type="GO" id="GO:0005506">
    <property type="term" value="F:iron ion binding"/>
    <property type="evidence" value="ECO:0007669"/>
    <property type="project" value="UniProtKB-UniRule"/>
</dbReference>
<dbReference type="GO" id="GO:0031418">
    <property type="term" value="F:L-ascorbic acid binding"/>
    <property type="evidence" value="ECO:0007669"/>
    <property type="project" value="UniProtKB-KW"/>
</dbReference>
<dbReference type="GO" id="GO:0006974">
    <property type="term" value="P:DNA damage response"/>
    <property type="evidence" value="ECO:0007669"/>
    <property type="project" value="TreeGrafter"/>
</dbReference>
<dbReference type="GO" id="GO:0006879">
    <property type="term" value="P:intracellular iron ion homeostasis"/>
    <property type="evidence" value="ECO:0007669"/>
    <property type="project" value="TreeGrafter"/>
</dbReference>
<dbReference type="FunFam" id="2.60.120.620:FF:000006">
    <property type="entry name" value="PKHD-type hydroxylase YbiX"/>
    <property type="match status" value="1"/>
</dbReference>
<dbReference type="Gene3D" id="2.60.120.620">
    <property type="entry name" value="q2cbj1_9rhob like domain"/>
    <property type="match status" value="1"/>
</dbReference>
<dbReference type="Gene3D" id="4.10.860.20">
    <property type="entry name" value="Rabenosyn, Rab binding domain"/>
    <property type="match status" value="1"/>
</dbReference>
<dbReference type="HAMAP" id="MF_00657">
    <property type="entry name" value="Hydroxyl_YbiX"/>
    <property type="match status" value="1"/>
</dbReference>
<dbReference type="InterPro" id="IPR005123">
    <property type="entry name" value="Oxoglu/Fe-dep_dioxygenase_dom"/>
</dbReference>
<dbReference type="InterPro" id="IPR041097">
    <property type="entry name" value="PKHD_C"/>
</dbReference>
<dbReference type="InterPro" id="IPR023550">
    <property type="entry name" value="PKHD_hydroxylase"/>
</dbReference>
<dbReference type="InterPro" id="IPR006620">
    <property type="entry name" value="Pro_4_hyd_alph"/>
</dbReference>
<dbReference type="InterPro" id="IPR044862">
    <property type="entry name" value="Pro_4_hyd_alph_FE2OG_OXY"/>
</dbReference>
<dbReference type="NCBIfam" id="NF003973">
    <property type="entry name" value="PRK05467.1-2"/>
    <property type="match status" value="1"/>
</dbReference>
<dbReference type="NCBIfam" id="NF003974">
    <property type="entry name" value="PRK05467.1-3"/>
    <property type="match status" value="1"/>
</dbReference>
<dbReference type="NCBIfam" id="NF003975">
    <property type="entry name" value="PRK05467.1-4"/>
    <property type="match status" value="1"/>
</dbReference>
<dbReference type="PANTHER" id="PTHR41536">
    <property type="entry name" value="PKHD-TYPE HYDROXYLASE YBIX"/>
    <property type="match status" value="1"/>
</dbReference>
<dbReference type="PANTHER" id="PTHR41536:SF1">
    <property type="entry name" value="PKHD-TYPE HYDROXYLASE YBIX"/>
    <property type="match status" value="1"/>
</dbReference>
<dbReference type="Pfam" id="PF13640">
    <property type="entry name" value="2OG-FeII_Oxy_3"/>
    <property type="match status" value="1"/>
</dbReference>
<dbReference type="Pfam" id="PF18331">
    <property type="entry name" value="PKHD_C"/>
    <property type="match status" value="1"/>
</dbReference>
<dbReference type="SMART" id="SM00702">
    <property type="entry name" value="P4Hc"/>
    <property type="match status" value="1"/>
</dbReference>
<dbReference type="SUPFAM" id="SSF51197">
    <property type="entry name" value="Clavaminate synthase-like"/>
    <property type="match status" value="1"/>
</dbReference>
<dbReference type="PROSITE" id="PS51471">
    <property type="entry name" value="FE2OG_OXY"/>
    <property type="match status" value="1"/>
</dbReference>
<evidence type="ECO:0000255" key="1">
    <source>
        <dbReference type="HAMAP-Rule" id="MF_00657"/>
    </source>
</evidence>
<sequence>MLIQIAEVFSAAEAAQIRQRLEQADWVDGRVTAGHQSAQVKHNRQLPEQHPLAQELGELILQRLSANNLFMSAALPRKIFPPLFNRYEGGESFGYHVDNAVRVVPGTSERVRTDLSATLFFSDPDTYDGGELVVDDTYGPRSVKLPAGHLVLYPGTSLHKVNPVTRGARISAFFWMQSLVREDSQRNLLLDMDVAIQRLNQDAAGHPSIVQLTGIYHNLLRRWADV</sequence>
<feature type="chain" id="PRO_0000346462" description="PKHD-type hydroxylase Bpet2704">
    <location>
        <begin position="1"/>
        <end position="226"/>
    </location>
</feature>
<feature type="domain" description="Fe2OG dioxygenase" evidence="1">
    <location>
        <begin position="78"/>
        <end position="178"/>
    </location>
</feature>
<feature type="binding site" evidence="1">
    <location>
        <position position="96"/>
    </location>
    <ligand>
        <name>Fe cation</name>
        <dbReference type="ChEBI" id="CHEBI:24875"/>
    </ligand>
</feature>
<feature type="binding site" evidence="1">
    <location>
        <position position="98"/>
    </location>
    <ligand>
        <name>Fe cation</name>
        <dbReference type="ChEBI" id="CHEBI:24875"/>
    </ligand>
</feature>
<feature type="binding site" evidence="1">
    <location>
        <position position="159"/>
    </location>
    <ligand>
        <name>Fe cation</name>
        <dbReference type="ChEBI" id="CHEBI:24875"/>
    </ligand>
</feature>
<feature type="binding site" evidence="1">
    <location>
        <position position="169"/>
    </location>
    <ligand>
        <name>2-oxoglutarate</name>
        <dbReference type="ChEBI" id="CHEBI:16810"/>
    </ligand>
</feature>
<reference key="1">
    <citation type="journal article" date="2008" name="BMC Genomics">
        <title>The missing link: Bordetella petrii is endowed with both the metabolic versatility of environmental bacteria and virulence traits of pathogenic Bordetellae.</title>
        <authorList>
            <person name="Gross R."/>
            <person name="Guzman C.A."/>
            <person name="Sebaihia M."/>
            <person name="Martin dos Santos V.A.P."/>
            <person name="Pieper D.H."/>
            <person name="Koebnik R."/>
            <person name="Lechner M."/>
            <person name="Bartels D."/>
            <person name="Buhrmester J."/>
            <person name="Choudhuri J.V."/>
            <person name="Ebensen T."/>
            <person name="Gaigalat L."/>
            <person name="Herrmann S."/>
            <person name="Khachane A.N."/>
            <person name="Larisch C."/>
            <person name="Link S."/>
            <person name="Linke B."/>
            <person name="Meyer F."/>
            <person name="Mormann S."/>
            <person name="Nakunst D."/>
            <person name="Rueckert C."/>
            <person name="Schneiker-Bekel S."/>
            <person name="Schulze K."/>
            <person name="Voerholter F.-J."/>
            <person name="Yevsa T."/>
            <person name="Engle J.T."/>
            <person name="Goldman W.E."/>
            <person name="Puehler A."/>
            <person name="Goebel U.B."/>
            <person name="Goesmann A."/>
            <person name="Bloecker H."/>
            <person name="Kaiser O."/>
            <person name="Martinez-Arias R."/>
        </authorList>
    </citation>
    <scope>NUCLEOTIDE SEQUENCE [LARGE SCALE GENOMIC DNA]</scope>
    <source>
        <strain>ATCC BAA-461 / DSM 12804 / CCUG 43448</strain>
    </source>
</reference>
<comment type="cofactor">
    <cofactor evidence="1">
        <name>Fe(2+)</name>
        <dbReference type="ChEBI" id="CHEBI:29033"/>
    </cofactor>
    <text evidence="1">Binds 1 Fe(2+) ion per subunit.</text>
</comment>
<comment type="cofactor">
    <cofactor evidence="1">
        <name>L-ascorbate</name>
        <dbReference type="ChEBI" id="CHEBI:38290"/>
    </cofactor>
</comment>
<accession>A9IQD9</accession>
<name>Y2704_BORPD</name>
<gene>
    <name type="ordered locus">Bpet2704</name>
</gene>
<proteinExistence type="inferred from homology"/>